<gene>
    <name evidence="1" type="primary">argC</name>
    <name type="ordered locus">BF0532</name>
</gene>
<organism>
    <name type="scientific">Bacteroides fragilis (strain YCH46)</name>
    <dbReference type="NCBI Taxonomy" id="295405"/>
    <lineage>
        <taxon>Bacteria</taxon>
        <taxon>Pseudomonadati</taxon>
        <taxon>Bacteroidota</taxon>
        <taxon>Bacteroidia</taxon>
        <taxon>Bacteroidales</taxon>
        <taxon>Bacteroidaceae</taxon>
        <taxon>Bacteroides</taxon>
    </lineage>
</organism>
<proteinExistence type="inferred from homology"/>
<reference key="1">
    <citation type="journal article" date="2004" name="Proc. Natl. Acad. Sci. U.S.A.">
        <title>Genomic analysis of Bacteroides fragilis reveals extensive DNA inversions regulating cell surface adaptation.</title>
        <authorList>
            <person name="Kuwahara T."/>
            <person name="Yamashita A."/>
            <person name="Hirakawa H."/>
            <person name="Nakayama H."/>
            <person name="Toh H."/>
            <person name="Okada N."/>
            <person name="Kuhara S."/>
            <person name="Hattori M."/>
            <person name="Hayashi T."/>
            <person name="Ohnishi Y."/>
        </authorList>
    </citation>
    <scope>NUCLEOTIDE SEQUENCE [LARGE SCALE GENOMIC DNA]</scope>
    <source>
        <strain>YCH46</strain>
    </source>
</reference>
<accession>Q64YZ5</accession>
<evidence type="ECO:0000255" key="1">
    <source>
        <dbReference type="HAMAP-Rule" id="MF_00150"/>
    </source>
</evidence>
<sequence length="322" mass="35937">MIKAGIIGGAGYTAGELIRLLINHPETEIVFINSTSNAGNKITDVHEGLYGECDLTFTDELPLEDIDVLFFCTAHGDTKKFMESHNIPEELKIIDLSMDYRIASPDHDFIYGLPELNRRATCTAKHVANPGCFATCIQLGLLPLAKHLMLNEDVMVNAITGSTGAGVKPGATSHFSWRNNNMSVYKAFEHQHVPEIKQSLKQLQNSFDAEIDFIPYRGDFPRGIFATLVVKTKVALEEIVRMYEEYYAKDSFVHIVDKNIDLKQVVNTNKCLIHLEKHGDKLLIISCIDNLLKGASGQAVHNMNLMFNLEETVGLRLKPSAF</sequence>
<protein>
    <recommendedName>
        <fullName evidence="1">N-acetyl-gamma-glutamyl-phosphate reductase</fullName>
        <shortName evidence="1">AGPR</shortName>
        <ecNumber evidence="1">1.2.1.38</ecNumber>
    </recommendedName>
    <alternativeName>
        <fullName evidence="1">N-acetyl-glutamate semialdehyde dehydrogenase</fullName>
        <shortName evidence="1">NAGSA dehydrogenase</shortName>
    </alternativeName>
</protein>
<comment type="function">
    <text evidence="1">Catalyzes the NADPH-dependent reduction of N-acetyl-5-glutamyl phosphate to yield N-acetyl-L-glutamate 5-semialdehyde.</text>
</comment>
<comment type="catalytic activity">
    <reaction evidence="1">
        <text>N-acetyl-L-glutamate 5-semialdehyde + phosphate + NADP(+) = N-acetyl-L-glutamyl 5-phosphate + NADPH + H(+)</text>
        <dbReference type="Rhea" id="RHEA:21588"/>
        <dbReference type="ChEBI" id="CHEBI:15378"/>
        <dbReference type="ChEBI" id="CHEBI:29123"/>
        <dbReference type="ChEBI" id="CHEBI:43474"/>
        <dbReference type="ChEBI" id="CHEBI:57783"/>
        <dbReference type="ChEBI" id="CHEBI:57936"/>
        <dbReference type="ChEBI" id="CHEBI:58349"/>
        <dbReference type="EC" id="1.2.1.38"/>
    </reaction>
</comment>
<comment type="pathway">
    <text evidence="1">Amino-acid biosynthesis; L-arginine biosynthesis; N(2)-acetyl-L-ornithine from L-glutamate: step 3/4.</text>
</comment>
<comment type="subcellular location">
    <subcellularLocation>
        <location evidence="1">Cytoplasm</location>
    </subcellularLocation>
</comment>
<comment type="similarity">
    <text evidence="1">Belongs to the NAGSA dehydrogenase family. Type 1 subfamily.</text>
</comment>
<name>ARGC_BACFR</name>
<feature type="chain" id="PRO_1000010978" description="N-acetyl-gamma-glutamyl-phosphate reductase">
    <location>
        <begin position="1"/>
        <end position="322"/>
    </location>
</feature>
<feature type="active site" evidence="1">
    <location>
        <position position="132"/>
    </location>
</feature>
<keyword id="KW-0028">Amino-acid biosynthesis</keyword>
<keyword id="KW-0055">Arginine biosynthesis</keyword>
<keyword id="KW-0963">Cytoplasm</keyword>
<keyword id="KW-0521">NADP</keyword>
<keyword id="KW-0560">Oxidoreductase</keyword>
<dbReference type="EC" id="1.2.1.38" evidence="1"/>
<dbReference type="EMBL" id="AP006841">
    <property type="protein sequence ID" value="BAD47281.1"/>
    <property type="molecule type" value="Genomic_DNA"/>
</dbReference>
<dbReference type="RefSeq" id="WP_005796494.1">
    <property type="nucleotide sequence ID" value="NZ_UYXF01000019.1"/>
</dbReference>
<dbReference type="RefSeq" id="YP_097815.1">
    <property type="nucleotide sequence ID" value="NC_006347.1"/>
</dbReference>
<dbReference type="SMR" id="Q64YZ5"/>
<dbReference type="STRING" id="295405.BF0532"/>
<dbReference type="KEGG" id="bfr:BF0532"/>
<dbReference type="PATRIC" id="fig|295405.11.peg.548"/>
<dbReference type="HOGENOM" id="CLU_006384_0_1_10"/>
<dbReference type="OrthoDB" id="9801289at2"/>
<dbReference type="UniPathway" id="UPA00068">
    <property type="reaction ID" value="UER00108"/>
</dbReference>
<dbReference type="Proteomes" id="UP000002197">
    <property type="component" value="Chromosome"/>
</dbReference>
<dbReference type="GO" id="GO:0005737">
    <property type="term" value="C:cytoplasm"/>
    <property type="evidence" value="ECO:0007669"/>
    <property type="project" value="UniProtKB-SubCell"/>
</dbReference>
<dbReference type="GO" id="GO:0003942">
    <property type="term" value="F:N-acetyl-gamma-glutamyl-phosphate reductase activity"/>
    <property type="evidence" value="ECO:0007669"/>
    <property type="project" value="UniProtKB-UniRule"/>
</dbReference>
<dbReference type="GO" id="GO:0051287">
    <property type="term" value="F:NAD binding"/>
    <property type="evidence" value="ECO:0007669"/>
    <property type="project" value="InterPro"/>
</dbReference>
<dbReference type="GO" id="GO:0070401">
    <property type="term" value="F:NADP+ binding"/>
    <property type="evidence" value="ECO:0007669"/>
    <property type="project" value="InterPro"/>
</dbReference>
<dbReference type="GO" id="GO:0006526">
    <property type="term" value="P:L-arginine biosynthetic process"/>
    <property type="evidence" value="ECO:0007669"/>
    <property type="project" value="UniProtKB-UniRule"/>
</dbReference>
<dbReference type="CDD" id="cd23934">
    <property type="entry name" value="AGPR_1_C"/>
    <property type="match status" value="1"/>
</dbReference>
<dbReference type="CDD" id="cd17895">
    <property type="entry name" value="AGPR_1_N"/>
    <property type="match status" value="1"/>
</dbReference>
<dbReference type="Gene3D" id="3.30.360.10">
    <property type="entry name" value="Dihydrodipicolinate Reductase, domain 2"/>
    <property type="match status" value="1"/>
</dbReference>
<dbReference type="Gene3D" id="3.40.50.720">
    <property type="entry name" value="NAD(P)-binding Rossmann-like Domain"/>
    <property type="match status" value="1"/>
</dbReference>
<dbReference type="HAMAP" id="MF_00150">
    <property type="entry name" value="ArgC_type1"/>
    <property type="match status" value="1"/>
</dbReference>
<dbReference type="InterPro" id="IPR023013">
    <property type="entry name" value="AGPR_AS"/>
</dbReference>
<dbReference type="InterPro" id="IPR000706">
    <property type="entry name" value="AGPR_type-1"/>
</dbReference>
<dbReference type="InterPro" id="IPR036291">
    <property type="entry name" value="NAD(P)-bd_dom_sf"/>
</dbReference>
<dbReference type="InterPro" id="IPR050085">
    <property type="entry name" value="NAGSA_dehydrogenase"/>
</dbReference>
<dbReference type="InterPro" id="IPR000534">
    <property type="entry name" value="Semialdehyde_DH_NAD-bd"/>
</dbReference>
<dbReference type="NCBIfam" id="TIGR01850">
    <property type="entry name" value="argC"/>
    <property type="match status" value="1"/>
</dbReference>
<dbReference type="PANTHER" id="PTHR32338:SF10">
    <property type="entry name" value="N-ACETYL-GAMMA-GLUTAMYL-PHOSPHATE REDUCTASE, CHLOROPLASTIC-RELATED"/>
    <property type="match status" value="1"/>
</dbReference>
<dbReference type="PANTHER" id="PTHR32338">
    <property type="entry name" value="N-ACETYL-GAMMA-GLUTAMYL-PHOSPHATE REDUCTASE, CHLOROPLASTIC-RELATED-RELATED"/>
    <property type="match status" value="1"/>
</dbReference>
<dbReference type="Pfam" id="PF01118">
    <property type="entry name" value="Semialdhyde_dh"/>
    <property type="match status" value="1"/>
</dbReference>
<dbReference type="Pfam" id="PF22698">
    <property type="entry name" value="Semialdhyde_dhC_1"/>
    <property type="match status" value="1"/>
</dbReference>
<dbReference type="SMART" id="SM00859">
    <property type="entry name" value="Semialdhyde_dh"/>
    <property type="match status" value="1"/>
</dbReference>
<dbReference type="SUPFAM" id="SSF55347">
    <property type="entry name" value="Glyceraldehyde-3-phosphate dehydrogenase-like, C-terminal domain"/>
    <property type="match status" value="1"/>
</dbReference>
<dbReference type="SUPFAM" id="SSF51735">
    <property type="entry name" value="NAD(P)-binding Rossmann-fold domains"/>
    <property type="match status" value="1"/>
</dbReference>
<dbReference type="PROSITE" id="PS01224">
    <property type="entry name" value="ARGC"/>
    <property type="match status" value="1"/>
</dbReference>